<protein>
    <recommendedName>
        <fullName>Microcin C7 self-immunity protein MccF</fullName>
    </recommendedName>
</protein>
<reference key="1">
    <citation type="journal article" date="1995" name="J. Bacteriol.">
        <title>Structure and organization of plasmid genes required to produce the translation inhibitor microcin C7.</title>
        <authorList>
            <person name="Gonzalez-Pastor J.E."/>
            <person name="San Millan J.L."/>
            <person name="Castilla M.A."/>
            <person name="Moreno F."/>
        </authorList>
    </citation>
    <scope>NUCLEOTIDE SEQUENCE [GENOMIC DNA]</scope>
</reference>
<proteinExistence type="evidence at protein level"/>
<accession>Q47511</accession>
<dbReference type="EMBL" id="X57583">
    <property type="protein sequence ID" value="CAA40814.1"/>
    <property type="molecule type" value="Genomic_DNA"/>
</dbReference>
<dbReference type="RefSeq" id="WP_000973426.1">
    <property type="nucleotide sequence ID" value="NZ_VRXN01000031.1"/>
</dbReference>
<dbReference type="PDB" id="3TLA">
    <property type="method" value="X-ray"/>
    <property type="resolution" value="1.20 A"/>
    <property type="chains" value="A/B=2-344"/>
</dbReference>
<dbReference type="PDB" id="3TLB">
    <property type="method" value="X-ray"/>
    <property type="resolution" value="1.50 A"/>
    <property type="chains" value="A/B=2-344"/>
</dbReference>
<dbReference type="PDB" id="3TLC">
    <property type="method" value="X-ray"/>
    <property type="resolution" value="1.30 A"/>
    <property type="chains" value="A/B=2-344"/>
</dbReference>
<dbReference type="PDB" id="3TLE">
    <property type="method" value="X-ray"/>
    <property type="resolution" value="1.30 A"/>
    <property type="chains" value="A/B=2-344"/>
</dbReference>
<dbReference type="PDB" id="3TLG">
    <property type="method" value="X-ray"/>
    <property type="resolution" value="1.50 A"/>
    <property type="chains" value="A/B=2-344"/>
</dbReference>
<dbReference type="PDB" id="3TLY">
    <property type="method" value="X-ray"/>
    <property type="resolution" value="1.70 A"/>
    <property type="chains" value="A/B=2-344"/>
</dbReference>
<dbReference type="PDB" id="3TLZ">
    <property type="method" value="X-ray"/>
    <property type="resolution" value="1.50 A"/>
    <property type="chains" value="A/B=2-344"/>
</dbReference>
<dbReference type="PDB" id="4IIX">
    <property type="method" value="X-ray"/>
    <property type="resolution" value="1.23 A"/>
    <property type="chains" value="A/B=2-344"/>
</dbReference>
<dbReference type="PDB" id="4IIY">
    <property type="method" value="X-ray"/>
    <property type="resolution" value="1.20 A"/>
    <property type="chains" value="A/B=2-344"/>
</dbReference>
<dbReference type="PDBsum" id="3TLA"/>
<dbReference type="PDBsum" id="3TLB"/>
<dbReference type="PDBsum" id="3TLC"/>
<dbReference type="PDBsum" id="3TLE"/>
<dbReference type="PDBsum" id="3TLG"/>
<dbReference type="PDBsum" id="3TLY"/>
<dbReference type="PDBsum" id="3TLZ"/>
<dbReference type="PDBsum" id="4IIX"/>
<dbReference type="PDBsum" id="4IIY"/>
<dbReference type="SMR" id="Q47511"/>
<dbReference type="DIP" id="DIP-60028N"/>
<dbReference type="ChEMBL" id="CHEMBL3596082"/>
<dbReference type="MEROPS" id="S66.003"/>
<dbReference type="EvolutionaryTrace" id="Q47511"/>
<dbReference type="GO" id="GO:0016787">
    <property type="term" value="F:hydrolase activity"/>
    <property type="evidence" value="ECO:0007669"/>
    <property type="project" value="UniProtKB-KW"/>
</dbReference>
<dbReference type="GO" id="GO:0042802">
    <property type="term" value="F:identical protein binding"/>
    <property type="evidence" value="ECO:0000353"/>
    <property type="project" value="IntAct"/>
</dbReference>
<dbReference type="GO" id="GO:0030153">
    <property type="term" value="P:bacteriocin immunity"/>
    <property type="evidence" value="ECO:0007669"/>
    <property type="project" value="UniProtKB-KW"/>
</dbReference>
<dbReference type="CDD" id="cd07062">
    <property type="entry name" value="Peptidase_S66_mccF_like"/>
    <property type="match status" value="1"/>
</dbReference>
<dbReference type="FunFam" id="3.40.50.10740:FF:000002">
    <property type="entry name" value="Microcin immunity protein MccF"/>
    <property type="match status" value="1"/>
</dbReference>
<dbReference type="FunFam" id="3.50.30.60:FF:000002">
    <property type="entry name" value="Microcin immunity protein MccF"/>
    <property type="match status" value="1"/>
</dbReference>
<dbReference type="Gene3D" id="3.40.50.10740">
    <property type="entry name" value="Class I glutamine amidotransferase-like"/>
    <property type="match status" value="1"/>
</dbReference>
<dbReference type="Gene3D" id="3.50.30.60">
    <property type="entry name" value="LD-carboxypeptidase A C-terminal domain-like"/>
    <property type="match status" value="1"/>
</dbReference>
<dbReference type="InterPro" id="IPR027461">
    <property type="entry name" value="Carboxypeptidase_A_C_sf"/>
</dbReference>
<dbReference type="InterPro" id="IPR029062">
    <property type="entry name" value="Class_I_gatase-like"/>
</dbReference>
<dbReference type="InterPro" id="IPR027478">
    <property type="entry name" value="LdcA_N"/>
</dbReference>
<dbReference type="InterPro" id="IPR040449">
    <property type="entry name" value="Peptidase_S66_N"/>
</dbReference>
<dbReference type="InterPro" id="IPR040921">
    <property type="entry name" value="Peptidase_S66C"/>
</dbReference>
<dbReference type="InterPro" id="IPR003507">
    <property type="entry name" value="S66_fam"/>
</dbReference>
<dbReference type="PANTHER" id="PTHR30237:SF5">
    <property type="entry name" value="CARBOXYPEPTIDASE VC_A0337-RELATED"/>
    <property type="match status" value="1"/>
</dbReference>
<dbReference type="PANTHER" id="PTHR30237">
    <property type="entry name" value="MURAMOYLTETRAPEPTIDE CARBOXYPEPTIDASE"/>
    <property type="match status" value="1"/>
</dbReference>
<dbReference type="Pfam" id="PF02016">
    <property type="entry name" value="Peptidase_S66"/>
    <property type="match status" value="1"/>
</dbReference>
<dbReference type="Pfam" id="PF17676">
    <property type="entry name" value="Peptidase_S66C"/>
    <property type="match status" value="1"/>
</dbReference>
<dbReference type="PIRSF" id="PIRSF028757">
    <property type="entry name" value="LD-carboxypeptidase"/>
    <property type="match status" value="1"/>
</dbReference>
<dbReference type="SUPFAM" id="SSF52317">
    <property type="entry name" value="Class I glutamine amidotransferase-like"/>
    <property type="match status" value="1"/>
</dbReference>
<dbReference type="SUPFAM" id="SSF141986">
    <property type="entry name" value="LD-carboxypeptidase A C-terminal domain-like"/>
    <property type="match status" value="1"/>
</dbReference>
<feature type="chain" id="PRO_0000172840" description="Microcin C7 self-immunity protein MccF">
    <location>
        <begin position="1"/>
        <end position="344"/>
    </location>
</feature>
<feature type="strand" evidence="2">
    <location>
        <begin position="18"/>
        <end position="22"/>
    </location>
</feature>
<feature type="helix" evidence="2">
    <location>
        <begin position="28"/>
        <end position="31"/>
    </location>
</feature>
<feature type="helix" evidence="2">
    <location>
        <begin position="33"/>
        <end position="45"/>
    </location>
</feature>
<feature type="strand" evidence="2">
    <location>
        <begin position="49"/>
        <end position="52"/>
    </location>
</feature>
<feature type="turn" evidence="2">
    <location>
        <begin position="54"/>
        <end position="57"/>
    </location>
</feature>
<feature type="strand" evidence="2">
    <location>
        <begin position="63"/>
        <end position="65"/>
    </location>
</feature>
<feature type="helix" evidence="2">
    <location>
        <begin position="67"/>
        <end position="79"/>
    </location>
</feature>
<feature type="strand" evidence="2">
    <location>
        <begin position="83"/>
        <end position="89"/>
    </location>
</feature>
<feature type="helix" evidence="2">
    <location>
        <begin position="95"/>
        <end position="101"/>
    </location>
</feature>
<feature type="helix" evidence="2">
    <location>
        <begin position="104"/>
        <end position="109"/>
    </location>
</feature>
<feature type="strand" evidence="2">
    <location>
        <begin position="113"/>
        <end position="116"/>
    </location>
</feature>
<feature type="helix" evidence="2">
    <location>
        <begin position="118"/>
        <end position="120"/>
    </location>
</feature>
<feature type="helix" evidence="2">
    <location>
        <begin position="121"/>
        <end position="131"/>
    </location>
</feature>
<feature type="strand" evidence="2">
    <location>
        <begin position="135"/>
        <end position="137"/>
    </location>
</feature>
<feature type="helix" evidence="2">
    <location>
        <begin position="141"/>
        <end position="145"/>
    </location>
</feature>
<feature type="helix" evidence="2">
    <location>
        <begin position="151"/>
        <end position="164"/>
    </location>
</feature>
<feature type="strand" evidence="2">
    <location>
        <begin position="177"/>
        <end position="180"/>
    </location>
</feature>
<feature type="strand" evidence="2">
    <location>
        <begin position="185"/>
        <end position="187"/>
    </location>
</feature>
<feature type="strand" evidence="2">
    <location>
        <begin position="203"/>
        <end position="206"/>
    </location>
</feature>
<feature type="strand" evidence="2">
    <location>
        <begin position="208"/>
        <end position="218"/>
    </location>
</feature>
<feature type="helix" evidence="2">
    <location>
        <begin position="219"/>
        <end position="222"/>
    </location>
</feature>
<feature type="turn" evidence="2">
    <location>
        <begin position="223"/>
        <end position="227"/>
    </location>
</feature>
<feature type="strand" evidence="2">
    <location>
        <begin position="239"/>
        <end position="243"/>
    </location>
</feature>
<feature type="helix" evidence="2">
    <location>
        <begin position="249"/>
        <end position="261"/>
    </location>
</feature>
<feature type="helix" evidence="2">
    <location>
        <begin position="264"/>
        <end position="266"/>
    </location>
</feature>
<feature type="strand" evidence="2">
    <location>
        <begin position="269"/>
        <end position="274"/>
    </location>
</feature>
<feature type="helix" evidence="2">
    <location>
        <begin position="288"/>
        <end position="296"/>
    </location>
</feature>
<feature type="strand" evidence="2">
    <location>
        <begin position="303"/>
        <end position="308"/>
    </location>
</feature>
<feature type="strand" evidence="2">
    <location>
        <begin position="310"/>
        <end position="314"/>
    </location>
</feature>
<feature type="strand" evidence="2">
    <location>
        <begin position="318"/>
        <end position="327"/>
    </location>
</feature>
<feature type="turn" evidence="2">
    <location>
        <begin position="328"/>
        <end position="331"/>
    </location>
</feature>
<feature type="strand" evidence="2">
    <location>
        <begin position="332"/>
        <end position="335"/>
    </location>
</feature>
<keyword id="KW-0002">3D-structure</keyword>
<keyword id="KW-0079">Bacteriocin immunity</keyword>
<keyword id="KW-0378">Hydrolase</keyword>
<keyword id="KW-0614">Plasmid</keyword>
<gene>
    <name type="primary">mccF</name>
</gene>
<organism>
    <name type="scientific">Escherichia coli</name>
    <dbReference type="NCBI Taxonomy" id="562"/>
    <lineage>
        <taxon>Bacteria</taxon>
        <taxon>Pseudomonadati</taxon>
        <taxon>Pseudomonadota</taxon>
        <taxon>Gammaproteobacteria</taxon>
        <taxon>Enterobacterales</taxon>
        <taxon>Enterobacteriaceae</taxon>
        <taxon>Escherichia</taxon>
    </lineage>
</organism>
<evidence type="ECO:0000305" key="1"/>
<evidence type="ECO:0007829" key="2">
    <source>
        <dbReference type="PDB" id="4IIY"/>
    </source>
</evidence>
<comment type="function">
    <text>Involved in specific self-immunity to microcin C7.</text>
</comment>
<comment type="interaction">
    <interactant intactId="EBI-15973002">
        <id>Q47511</id>
    </interactant>
    <interactant intactId="EBI-15973002">
        <id>Q47511</id>
        <label>mccF</label>
    </interactant>
    <organismsDiffer>false</organismsDiffer>
    <experiments>2</experiments>
</comment>
<comment type="similarity">
    <text evidence="1">Belongs to the peptidase S66 family.</text>
</comment>
<geneLocation type="plasmid">
    <name>pMccC7</name>
</geneLocation>
<sequence>MMIQSHPLLAAPLAVGDTIGFFSSSAPATVTAKNRFFRGVEFLQRKGFKLVSGKLTGKTDFYRSGTIKERAQEFNELVYNPDITCIMSTIGGDNSNSLLPFLDYDAIIANPKIIIGYSDTTALLAGIYAKTGLITFYGPALIPSFGEHPPLVDITYESFIKILTRKQSGIYTYTLPEKWSDESINWNENKILRPKKLYKNNCAFYGSGKVEGRVIGGNLNTLTGIWGSEWMPEILNGDILFIEDSRKSIATIERLFSMLKLNRVFDKVSAIILGKHELFDCAGSKRRPYEVLTEVLDGKQIPVLDGFDCSHTHPMLTLPLGVKLAIDFDNKNISITEQYLSTEK</sequence>
<name>MCCF_ECOLX</name>